<gene>
    <name evidence="1" type="primary">surE</name>
    <name type="ordered locus">Gmet_1419</name>
</gene>
<reference key="1">
    <citation type="journal article" date="2009" name="BMC Microbiol.">
        <title>The genome sequence of Geobacter metallireducens: features of metabolism, physiology and regulation common and dissimilar to Geobacter sulfurreducens.</title>
        <authorList>
            <person name="Aklujkar M."/>
            <person name="Krushkal J."/>
            <person name="DiBartolo G."/>
            <person name="Lapidus A."/>
            <person name="Land M.L."/>
            <person name="Lovley D.R."/>
        </authorList>
    </citation>
    <scope>NUCLEOTIDE SEQUENCE [LARGE SCALE GENOMIC DNA]</scope>
    <source>
        <strain>ATCC 53774 / DSM 7210 / GS-15</strain>
    </source>
</reference>
<accession>Q39VS1</accession>
<name>SURE_GEOMG</name>
<evidence type="ECO:0000255" key="1">
    <source>
        <dbReference type="HAMAP-Rule" id="MF_00060"/>
    </source>
</evidence>
<keyword id="KW-0963">Cytoplasm</keyword>
<keyword id="KW-0378">Hydrolase</keyword>
<keyword id="KW-0479">Metal-binding</keyword>
<keyword id="KW-0547">Nucleotide-binding</keyword>
<keyword id="KW-1185">Reference proteome</keyword>
<comment type="function">
    <text evidence="1">Nucleotidase that shows phosphatase activity on nucleoside 5'-monophosphates.</text>
</comment>
<comment type="catalytic activity">
    <reaction evidence="1">
        <text>a ribonucleoside 5'-phosphate + H2O = a ribonucleoside + phosphate</text>
        <dbReference type="Rhea" id="RHEA:12484"/>
        <dbReference type="ChEBI" id="CHEBI:15377"/>
        <dbReference type="ChEBI" id="CHEBI:18254"/>
        <dbReference type="ChEBI" id="CHEBI:43474"/>
        <dbReference type="ChEBI" id="CHEBI:58043"/>
        <dbReference type="EC" id="3.1.3.5"/>
    </reaction>
</comment>
<comment type="cofactor">
    <cofactor evidence="1">
        <name>a divalent metal cation</name>
        <dbReference type="ChEBI" id="CHEBI:60240"/>
    </cofactor>
    <text evidence="1">Binds 1 divalent metal cation per subunit.</text>
</comment>
<comment type="subcellular location">
    <subcellularLocation>
        <location evidence="1">Cytoplasm</location>
    </subcellularLocation>
</comment>
<comment type="similarity">
    <text evidence="1">Belongs to the SurE nucleotidase family.</text>
</comment>
<proteinExistence type="inferred from homology"/>
<protein>
    <recommendedName>
        <fullName evidence="1">5'-nucleotidase SurE</fullName>
        <ecNumber evidence="1">3.1.3.5</ecNumber>
    </recommendedName>
    <alternativeName>
        <fullName evidence="1">Nucleoside 5'-monophosphate phosphohydrolase</fullName>
    </alternativeName>
</protein>
<dbReference type="EC" id="3.1.3.5" evidence="1"/>
<dbReference type="EMBL" id="CP000148">
    <property type="protein sequence ID" value="ABB31653.1"/>
    <property type="molecule type" value="Genomic_DNA"/>
</dbReference>
<dbReference type="RefSeq" id="WP_004511648.1">
    <property type="nucleotide sequence ID" value="NC_007517.1"/>
</dbReference>
<dbReference type="SMR" id="Q39VS1"/>
<dbReference type="STRING" id="269799.Gmet_1419"/>
<dbReference type="KEGG" id="gme:Gmet_1419"/>
<dbReference type="eggNOG" id="COG0496">
    <property type="taxonomic scope" value="Bacteria"/>
</dbReference>
<dbReference type="HOGENOM" id="CLU_045192_1_2_7"/>
<dbReference type="Proteomes" id="UP000007073">
    <property type="component" value="Chromosome"/>
</dbReference>
<dbReference type="GO" id="GO:0005737">
    <property type="term" value="C:cytoplasm"/>
    <property type="evidence" value="ECO:0007669"/>
    <property type="project" value="UniProtKB-SubCell"/>
</dbReference>
<dbReference type="GO" id="GO:0008254">
    <property type="term" value="F:3'-nucleotidase activity"/>
    <property type="evidence" value="ECO:0007669"/>
    <property type="project" value="TreeGrafter"/>
</dbReference>
<dbReference type="GO" id="GO:0008253">
    <property type="term" value="F:5'-nucleotidase activity"/>
    <property type="evidence" value="ECO:0007669"/>
    <property type="project" value="UniProtKB-UniRule"/>
</dbReference>
<dbReference type="GO" id="GO:0004309">
    <property type="term" value="F:exopolyphosphatase activity"/>
    <property type="evidence" value="ECO:0007669"/>
    <property type="project" value="TreeGrafter"/>
</dbReference>
<dbReference type="GO" id="GO:0046872">
    <property type="term" value="F:metal ion binding"/>
    <property type="evidence" value="ECO:0007669"/>
    <property type="project" value="UniProtKB-UniRule"/>
</dbReference>
<dbReference type="GO" id="GO:0000166">
    <property type="term" value="F:nucleotide binding"/>
    <property type="evidence" value="ECO:0007669"/>
    <property type="project" value="UniProtKB-KW"/>
</dbReference>
<dbReference type="FunFam" id="3.40.1210.10:FF:000001">
    <property type="entry name" value="5'/3'-nucleotidase SurE"/>
    <property type="match status" value="1"/>
</dbReference>
<dbReference type="Gene3D" id="3.40.1210.10">
    <property type="entry name" value="Survival protein SurE-like phosphatase/nucleotidase"/>
    <property type="match status" value="1"/>
</dbReference>
<dbReference type="HAMAP" id="MF_00060">
    <property type="entry name" value="SurE"/>
    <property type="match status" value="1"/>
</dbReference>
<dbReference type="InterPro" id="IPR030048">
    <property type="entry name" value="SurE"/>
</dbReference>
<dbReference type="InterPro" id="IPR002828">
    <property type="entry name" value="SurE-like_Pase/nucleotidase"/>
</dbReference>
<dbReference type="InterPro" id="IPR036523">
    <property type="entry name" value="SurE-like_sf"/>
</dbReference>
<dbReference type="NCBIfam" id="NF001489">
    <property type="entry name" value="PRK00346.1-3"/>
    <property type="match status" value="1"/>
</dbReference>
<dbReference type="NCBIfam" id="NF001490">
    <property type="entry name" value="PRK00346.1-4"/>
    <property type="match status" value="1"/>
</dbReference>
<dbReference type="NCBIfam" id="NF001492">
    <property type="entry name" value="PRK00346.2-2"/>
    <property type="match status" value="1"/>
</dbReference>
<dbReference type="NCBIfam" id="TIGR00087">
    <property type="entry name" value="surE"/>
    <property type="match status" value="1"/>
</dbReference>
<dbReference type="PANTHER" id="PTHR30457">
    <property type="entry name" value="5'-NUCLEOTIDASE SURE"/>
    <property type="match status" value="1"/>
</dbReference>
<dbReference type="PANTHER" id="PTHR30457:SF12">
    <property type="entry name" value="5'_3'-NUCLEOTIDASE SURE"/>
    <property type="match status" value="1"/>
</dbReference>
<dbReference type="Pfam" id="PF01975">
    <property type="entry name" value="SurE"/>
    <property type="match status" value="1"/>
</dbReference>
<dbReference type="SUPFAM" id="SSF64167">
    <property type="entry name" value="SurE-like"/>
    <property type="match status" value="1"/>
</dbReference>
<organism>
    <name type="scientific">Geobacter metallireducens (strain ATCC 53774 / DSM 7210 / GS-15)</name>
    <dbReference type="NCBI Taxonomy" id="269799"/>
    <lineage>
        <taxon>Bacteria</taxon>
        <taxon>Pseudomonadati</taxon>
        <taxon>Thermodesulfobacteriota</taxon>
        <taxon>Desulfuromonadia</taxon>
        <taxon>Geobacterales</taxon>
        <taxon>Geobacteraceae</taxon>
        <taxon>Geobacter</taxon>
    </lineage>
</organism>
<feature type="chain" id="PRO_0000235616" description="5'-nucleotidase SurE">
    <location>
        <begin position="1"/>
        <end position="252"/>
    </location>
</feature>
<feature type="binding site" evidence="1">
    <location>
        <position position="8"/>
    </location>
    <ligand>
        <name>a divalent metal cation</name>
        <dbReference type="ChEBI" id="CHEBI:60240"/>
    </ligand>
</feature>
<feature type="binding site" evidence="1">
    <location>
        <position position="9"/>
    </location>
    <ligand>
        <name>a divalent metal cation</name>
        <dbReference type="ChEBI" id="CHEBI:60240"/>
    </ligand>
</feature>
<feature type="binding site" evidence="1">
    <location>
        <position position="39"/>
    </location>
    <ligand>
        <name>a divalent metal cation</name>
        <dbReference type="ChEBI" id="CHEBI:60240"/>
    </ligand>
</feature>
<feature type="binding site" evidence="1">
    <location>
        <position position="91"/>
    </location>
    <ligand>
        <name>a divalent metal cation</name>
        <dbReference type="ChEBI" id="CHEBI:60240"/>
    </ligand>
</feature>
<sequence length="252" mass="26884">MKILVTNDDGVRAPGIRSLAEALRNIGDVVVVAPDRERSAVGHALTLHHPLRASEIRPAVFAVDGTPTDCVNLGIHTLLGSRPDIVVSGVNCGGNMGDDITYSGTVSAAMEATLMGIPALAVSLATSGRGDNYAVASAFAARLVRIVSERGLPPDTLLNVNVPDLPLEKLGGAVVTIQGKRDYEGKIVTKTDPRGRNYYWIGNGSLQFRDLEGTDYYAVKRGLVSITPLHLDLTNYASLTTLKTWDFAEMTL</sequence>